<dbReference type="EC" id="3.6.-.-" evidence="1"/>
<dbReference type="EMBL" id="CP000891">
    <property type="protein sequence ID" value="ABX51677.1"/>
    <property type="molecule type" value="Genomic_DNA"/>
</dbReference>
<dbReference type="RefSeq" id="WP_012197887.1">
    <property type="nucleotide sequence ID" value="NC_009997.1"/>
</dbReference>
<dbReference type="SMR" id="A9KX19"/>
<dbReference type="GeneID" id="11774474"/>
<dbReference type="KEGG" id="sbn:Sbal195_4520"/>
<dbReference type="HOGENOM" id="CLU_019624_4_1_6"/>
<dbReference type="Proteomes" id="UP000000770">
    <property type="component" value="Chromosome"/>
</dbReference>
<dbReference type="GO" id="GO:0005829">
    <property type="term" value="C:cytosol"/>
    <property type="evidence" value="ECO:0007669"/>
    <property type="project" value="TreeGrafter"/>
</dbReference>
<dbReference type="GO" id="GO:0005525">
    <property type="term" value="F:GTP binding"/>
    <property type="evidence" value="ECO:0007669"/>
    <property type="project" value="UniProtKB-UniRule"/>
</dbReference>
<dbReference type="GO" id="GO:0003924">
    <property type="term" value="F:GTPase activity"/>
    <property type="evidence" value="ECO:0007669"/>
    <property type="project" value="UniProtKB-UniRule"/>
</dbReference>
<dbReference type="GO" id="GO:0046872">
    <property type="term" value="F:metal ion binding"/>
    <property type="evidence" value="ECO:0007669"/>
    <property type="project" value="UniProtKB-KW"/>
</dbReference>
<dbReference type="GO" id="GO:0030488">
    <property type="term" value="P:tRNA methylation"/>
    <property type="evidence" value="ECO:0007669"/>
    <property type="project" value="TreeGrafter"/>
</dbReference>
<dbReference type="GO" id="GO:0002098">
    <property type="term" value="P:tRNA wobble uridine modification"/>
    <property type="evidence" value="ECO:0007669"/>
    <property type="project" value="TreeGrafter"/>
</dbReference>
<dbReference type="CDD" id="cd04164">
    <property type="entry name" value="trmE"/>
    <property type="match status" value="1"/>
</dbReference>
<dbReference type="CDD" id="cd14858">
    <property type="entry name" value="TrmE_N"/>
    <property type="match status" value="1"/>
</dbReference>
<dbReference type="FunFam" id="3.30.1360.120:FF:000001">
    <property type="entry name" value="tRNA modification GTPase MnmE"/>
    <property type="match status" value="1"/>
</dbReference>
<dbReference type="FunFam" id="3.40.50.300:FF:000249">
    <property type="entry name" value="tRNA modification GTPase MnmE"/>
    <property type="match status" value="1"/>
</dbReference>
<dbReference type="Gene3D" id="3.40.50.300">
    <property type="entry name" value="P-loop containing nucleotide triphosphate hydrolases"/>
    <property type="match status" value="1"/>
</dbReference>
<dbReference type="Gene3D" id="3.30.1360.120">
    <property type="entry name" value="Probable tRNA modification gtpase trme, domain 1"/>
    <property type="match status" value="1"/>
</dbReference>
<dbReference type="Gene3D" id="1.20.120.430">
    <property type="entry name" value="tRNA modification GTPase MnmE domain 2"/>
    <property type="match status" value="1"/>
</dbReference>
<dbReference type="HAMAP" id="MF_00379">
    <property type="entry name" value="GTPase_MnmE"/>
    <property type="match status" value="1"/>
</dbReference>
<dbReference type="InterPro" id="IPR031168">
    <property type="entry name" value="G_TrmE"/>
</dbReference>
<dbReference type="InterPro" id="IPR006073">
    <property type="entry name" value="GTP-bd"/>
</dbReference>
<dbReference type="InterPro" id="IPR018948">
    <property type="entry name" value="GTP-bd_TrmE_N"/>
</dbReference>
<dbReference type="InterPro" id="IPR004520">
    <property type="entry name" value="GTPase_MnmE"/>
</dbReference>
<dbReference type="InterPro" id="IPR027368">
    <property type="entry name" value="MnmE_dom2"/>
</dbReference>
<dbReference type="InterPro" id="IPR025867">
    <property type="entry name" value="MnmE_helical"/>
</dbReference>
<dbReference type="InterPro" id="IPR027417">
    <property type="entry name" value="P-loop_NTPase"/>
</dbReference>
<dbReference type="InterPro" id="IPR005225">
    <property type="entry name" value="Small_GTP-bd"/>
</dbReference>
<dbReference type="InterPro" id="IPR027266">
    <property type="entry name" value="TrmE/GcvT_dom1"/>
</dbReference>
<dbReference type="NCBIfam" id="TIGR00450">
    <property type="entry name" value="mnmE_trmE_thdF"/>
    <property type="match status" value="1"/>
</dbReference>
<dbReference type="NCBIfam" id="NF003661">
    <property type="entry name" value="PRK05291.1-3"/>
    <property type="match status" value="1"/>
</dbReference>
<dbReference type="NCBIfam" id="TIGR00231">
    <property type="entry name" value="small_GTP"/>
    <property type="match status" value="1"/>
</dbReference>
<dbReference type="PANTHER" id="PTHR42714">
    <property type="entry name" value="TRNA MODIFICATION GTPASE GTPBP3"/>
    <property type="match status" value="1"/>
</dbReference>
<dbReference type="PANTHER" id="PTHR42714:SF2">
    <property type="entry name" value="TRNA MODIFICATION GTPASE GTPBP3, MITOCHONDRIAL"/>
    <property type="match status" value="1"/>
</dbReference>
<dbReference type="Pfam" id="PF01926">
    <property type="entry name" value="MMR_HSR1"/>
    <property type="match status" value="1"/>
</dbReference>
<dbReference type="Pfam" id="PF12631">
    <property type="entry name" value="MnmE_helical"/>
    <property type="match status" value="1"/>
</dbReference>
<dbReference type="Pfam" id="PF10396">
    <property type="entry name" value="TrmE_N"/>
    <property type="match status" value="1"/>
</dbReference>
<dbReference type="SUPFAM" id="SSF52540">
    <property type="entry name" value="P-loop containing nucleoside triphosphate hydrolases"/>
    <property type="match status" value="1"/>
</dbReference>
<dbReference type="SUPFAM" id="SSF116878">
    <property type="entry name" value="TrmE connector domain"/>
    <property type="match status" value="1"/>
</dbReference>
<dbReference type="PROSITE" id="PS51709">
    <property type="entry name" value="G_TRME"/>
    <property type="match status" value="1"/>
</dbReference>
<organism>
    <name type="scientific">Shewanella baltica (strain OS195)</name>
    <dbReference type="NCBI Taxonomy" id="399599"/>
    <lineage>
        <taxon>Bacteria</taxon>
        <taxon>Pseudomonadati</taxon>
        <taxon>Pseudomonadota</taxon>
        <taxon>Gammaproteobacteria</taxon>
        <taxon>Alteromonadales</taxon>
        <taxon>Shewanellaceae</taxon>
        <taxon>Shewanella</taxon>
    </lineage>
</organism>
<reference key="1">
    <citation type="submission" date="2007-11" db="EMBL/GenBank/DDBJ databases">
        <title>Complete sequence of chromosome of Shewanella baltica OS195.</title>
        <authorList>
            <consortium name="US DOE Joint Genome Institute"/>
            <person name="Copeland A."/>
            <person name="Lucas S."/>
            <person name="Lapidus A."/>
            <person name="Barry K."/>
            <person name="Glavina del Rio T."/>
            <person name="Dalin E."/>
            <person name="Tice H."/>
            <person name="Pitluck S."/>
            <person name="Chain P."/>
            <person name="Malfatti S."/>
            <person name="Shin M."/>
            <person name="Vergez L."/>
            <person name="Schmutz J."/>
            <person name="Larimer F."/>
            <person name="Land M."/>
            <person name="Hauser L."/>
            <person name="Kyrpides N."/>
            <person name="Kim E."/>
            <person name="Brettar I."/>
            <person name="Rodrigues J."/>
            <person name="Konstantinidis K."/>
            <person name="Klappenbach J."/>
            <person name="Hofle M."/>
            <person name="Tiedje J."/>
            <person name="Richardson P."/>
        </authorList>
    </citation>
    <scope>NUCLEOTIDE SEQUENCE [LARGE SCALE GENOMIC DNA]</scope>
    <source>
        <strain>OS195</strain>
    </source>
</reference>
<accession>A9KX19</accession>
<name>MNME_SHEB9</name>
<gene>
    <name evidence="1" type="primary">mnmE</name>
    <name evidence="1" type="synonym">trmE</name>
    <name type="ordered locus">Sbal195_4520</name>
</gene>
<evidence type="ECO:0000255" key="1">
    <source>
        <dbReference type="HAMAP-Rule" id="MF_00379"/>
    </source>
</evidence>
<sequence>MTTDTIVAQATAPGRGGVGIIRISGDKASDVAMAVLGHLPKTRYADYCDFKSASGQVIDQGIALFFKGPNSFTGEDVLELQGHGGQIVLDMLIKRVMEVGGIRIAKPGEFSEQAFMNDKLDLTQAEAIADLIDATSEQAAKSALQSLQGEFSKEVHELVDQVTNLRLYVEAAIDFPDEEVDFLSDGKIANALYKIIDKLDLVQASAKQGSIIREGMKVVIAGRPNAGKSSLLNALAGKESAIVTEIAGTTRDVLREHIHLDGMPLHIIDTAGLRDTNDTVEQIGIERAWNEINSADRVLFMVDGTTTAAVDPHTIWPDFVDRLPSNLGVTVIRNKADLTGEDLMMTEEQGYSVYRISAKTGLGVEELKQHLKSLMGYQSNLEGGFIARRRHLEALELAAGHLQLGKEQLEVYLAGELLAEELRMCQLALSEITGRFTSDDLLGKIFSSFCIGK</sequence>
<feature type="chain" id="PRO_1000080013" description="tRNA modification GTPase MnmE">
    <location>
        <begin position="1"/>
        <end position="453"/>
    </location>
</feature>
<feature type="domain" description="TrmE-type G">
    <location>
        <begin position="215"/>
        <end position="376"/>
    </location>
</feature>
<feature type="binding site" evidence="1">
    <location>
        <position position="22"/>
    </location>
    <ligand>
        <name>(6S)-5-formyl-5,6,7,8-tetrahydrofolate</name>
        <dbReference type="ChEBI" id="CHEBI:57457"/>
    </ligand>
</feature>
<feature type="binding site" evidence="1">
    <location>
        <position position="79"/>
    </location>
    <ligand>
        <name>(6S)-5-formyl-5,6,7,8-tetrahydrofolate</name>
        <dbReference type="ChEBI" id="CHEBI:57457"/>
    </ligand>
</feature>
<feature type="binding site" evidence="1">
    <location>
        <position position="119"/>
    </location>
    <ligand>
        <name>(6S)-5-formyl-5,6,7,8-tetrahydrofolate</name>
        <dbReference type="ChEBI" id="CHEBI:57457"/>
    </ligand>
</feature>
<feature type="binding site" evidence="1">
    <location>
        <begin position="225"/>
        <end position="230"/>
    </location>
    <ligand>
        <name>GTP</name>
        <dbReference type="ChEBI" id="CHEBI:37565"/>
    </ligand>
</feature>
<feature type="binding site" evidence="1">
    <location>
        <position position="225"/>
    </location>
    <ligand>
        <name>K(+)</name>
        <dbReference type="ChEBI" id="CHEBI:29103"/>
    </ligand>
</feature>
<feature type="binding site" evidence="1">
    <location>
        <position position="229"/>
    </location>
    <ligand>
        <name>Mg(2+)</name>
        <dbReference type="ChEBI" id="CHEBI:18420"/>
    </ligand>
</feature>
<feature type="binding site" evidence="1">
    <location>
        <begin position="244"/>
        <end position="250"/>
    </location>
    <ligand>
        <name>GTP</name>
        <dbReference type="ChEBI" id="CHEBI:37565"/>
    </ligand>
</feature>
<feature type="binding site" evidence="1">
    <location>
        <position position="244"/>
    </location>
    <ligand>
        <name>K(+)</name>
        <dbReference type="ChEBI" id="CHEBI:29103"/>
    </ligand>
</feature>
<feature type="binding site" evidence="1">
    <location>
        <position position="246"/>
    </location>
    <ligand>
        <name>K(+)</name>
        <dbReference type="ChEBI" id="CHEBI:29103"/>
    </ligand>
</feature>
<feature type="binding site" evidence="1">
    <location>
        <position position="249"/>
    </location>
    <ligand>
        <name>K(+)</name>
        <dbReference type="ChEBI" id="CHEBI:29103"/>
    </ligand>
</feature>
<feature type="binding site" evidence="1">
    <location>
        <position position="250"/>
    </location>
    <ligand>
        <name>Mg(2+)</name>
        <dbReference type="ChEBI" id="CHEBI:18420"/>
    </ligand>
</feature>
<feature type="binding site" evidence="1">
    <location>
        <begin position="269"/>
        <end position="272"/>
    </location>
    <ligand>
        <name>GTP</name>
        <dbReference type="ChEBI" id="CHEBI:37565"/>
    </ligand>
</feature>
<feature type="binding site" evidence="1">
    <location>
        <begin position="334"/>
        <end position="337"/>
    </location>
    <ligand>
        <name>GTP</name>
        <dbReference type="ChEBI" id="CHEBI:37565"/>
    </ligand>
</feature>
<feature type="binding site" evidence="1">
    <location>
        <position position="453"/>
    </location>
    <ligand>
        <name>(6S)-5-formyl-5,6,7,8-tetrahydrofolate</name>
        <dbReference type="ChEBI" id="CHEBI:57457"/>
    </ligand>
</feature>
<protein>
    <recommendedName>
        <fullName evidence="1">tRNA modification GTPase MnmE</fullName>
        <ecNumber evidence="1">3.6.-.-</ecNumber>
    </recommendedName>
</protein>
<comment type="function">
    <text evidence="1">Exhibits a very high intrinsic GTPase hydrolysis rate. Involved in the addition of a carboxymethylaminomethyl (cmnm) group at the wobble position (U34) of certain tRNAs, forming tRNA-cmnm(5)s(2)U34.</text>
</comment>
<comment type="cofactor">
    <cofactor evidence="1">
        <name>K(+)</name>
        <dbReference type="ChEBI" id="CHEBI:29103"/>
    </cofactor>
    <text evidence="1">Binds 1 potassium ion per subunit.</text>
</comment>
<comment type="subunit">
    <text evidence="1">Homodimer. Heterotetramer of two MnmE and two MnmG subunits.</text>
</comment>
<comment type="subcellular location">
    <subcellularLocation>
        <location evidence="1">Cytoplasm</location>
    </subcellularLocation>
</comment>
<comment type="similarity">
    <text evidence="1">Belongs to the TRAFAC class TrmE-Era-EngA-EngB-Septin-like GTPase superfamily. TrmE GTPase family.</text>
</comment>
<proteinExistence type="inferred from homology"/>
<keyword id="KW-0963">Cytoplasm</keyword>
<keyword id="KW-0342">GTP-binding</keyword>
<keyword id="KW-0378">Hydrolase</keyword>
<keyword id="KW-0460">Magnesium</keyword>
<keyword id="KW-0479">Metal-binding</keyword>
<keyword id="KW-0547">Nucleotide-binding</keyword>
<keyword id="KW-0630">Potassium</keyword>
<keyword id="KW-0819">tRNA processing</keyword>